<proteinExistence type="evidence at protein level"/>
<feature type="chain" id="PRO_0000151520" description="Hydroxymethylglutaryl-CoA lyase, mitochondrial">
    <location>
        <begin position="1"/>
        <end position="298"/>
    </location>
</feature>
<feature type="domain" description="Pyruvate carboxyltransferase" evidence="5">
    <location>
        <begin position="6"/>
        <end position="273"/>
    </location>
</feature>
<feature type="short sequence motif" description="Microbody targeting signal" evidence="4">
    <location>
        <begin position="296"/>
        <end position="298"/>
    </location>
</feature>
<feature type="active site" evidence="6">
    <location>
        <position position="239"/>
    </location>
</feature>
<feature type="binding site" evidence="1">
    <location>
        <position position="14"/>
    </location>
    <ligand>
        <name>substrate</name>
    </ligand>
</feature>
<feature type="binding site" evidence="1">
    <location>
        <position position="15"/>
    </location>
    <ligand>
        <name>a divalent metal cation</name>
        <dbReference type="ChEBI" id="CHEBI:60240"/>
    </ligand>
</feature>
<feature type="binding site" evidence="1">
    <location>
        <position position="206"/>
    </location>
    <ligand>
        <name>a divalent metal cation</name>
        <dbReference type="ChEBI" id="CHEBI:60240"/>
    </ligand>
</feature>
<feature type="binding site" evidence="1">
    <location>
        <position position="208"/>
    </location>
    <ligand>
        <name>a divalent metal cation</name>
        <dbReference type="ChEBI" id="CHEBI:60240"/>
    </ligand>
</feature>
<feature type="binding site" evidence="1">
    <location>
        <position position="248"/>
    </location>
    <ligand>
        <name>a divalent metal cation</name>
        <dbReference type="ChEBI" id="CHEBI:60240"/>
    </ligand>
</feature>
<feature type="modified residue" description="N6-acetyllysine" evidence="1">
    <location>
        <position position="21"/>
    </location>
</feature>
<feature type="disulfide bond" description="Interchain" evidence="1">
    <location>
        <position position="296"/>
    </location>
</feature>
<comment type="function">
    <text evidence="2">Mitochondrial 3-hydroxy-3-methylglutaryl-CoA lyase that catalyzes a cation-dependent cleavage of (S)-3-hydroxy-3-methylglutaryl-CoA into acetyl-CoA and acetoacetate, a key step in ketogenesis. Terminal step in leucine catabolism. Ketone bodies (beta-hydroxybutyrate, acetoacetate and acetone) are essential as an alternative source of energy to glucose, as lipid precursors and as regulators of metabolism.</text>
</comment>
<comment type="catalytic activity">
    <reaction evidence="2">
        <text>(3S)-3-hydroxy-3-methylglutaryl-CoA = acetoacetate + acetyl-CoA</text>
        <dbReference type="Rhea" id="RHEA:24404"/>
        <dbReference type="ChEBI" id="CHEBI:13705"/>
        <dbReference type="ChEBI" id="CHEBI:43074"/>
        <dbReference type="ChEBI" id="CHEBI:57288"/>
        <dbReference type="EC" id="4.1.3.4"/>
    </reaction>
</comment>
<comment type="pathway">
    <text>Metabolic intermediate metabolism; (S)-3-hydroxy-3-methylglutaryl-CoA degradation; acetoacetate from (S)-3-hydroxy-3-methylglutaryl-CoA: step 1/1.</text>
</comment>
<comment type="subunit">
    <text evidence="1">Homodimer; disulfide-linked. Can also form homotetramers.</text>
</comment>
<comment type="subcellular location">
    <subcellularLocation>
        <location evidence="3">Mitochondrion matrix</location>
    </subcellularLocation>
    <subcellularLocation>
        <location evidence="3">Peroxisome</location>
    </subcellularLocation>
    <text evidence="3">Unprocessed form is peroxisomal.</text>
</comment>
<comment type="similarity">
    <text evidence="7">Belongs to the HMG-CoA lyase family.</text>
</comment>
<comment type="sequence caution" evidence="7">
    <conflict type="erroneous initiation">
        <sequence resource="EMBL-CDS" id="AAA92728"/>
    </conflict>
</comment>
<keyword id="KW-0007">Acetylation</keyword>
<keyword id="KW-0903">Direct protein sequencing</keyword>
<keyword id="KW-1015">Disulfide bond</keyword>
<keyword id="KW-0443">Lipid metabolism</keyword>
<keyword id="KW-0456">Lyase</keyword>
<keyword id="KW-0479">Metal-binding</keyword>
<keyword id="KW-0496">Mitochondrion</keyword>
<keyword id="KW-0576">Peroxisome</keyword>
<keyword id="KW-1185">Reference proteome</keyword>
<protein>
    <recommendedName>
        <fullName>Hydroxymethylglutaryl-CoA lyase, mitochondrial</fullName>
        <shortName>HL</shortName>
        <shortName>HMG-CoA lyase</shortName>
        <ecNumber evidence="2">4.1.3.4</ecNumber>
    </recommendedName>
    <alternativeName>
        <fullName>3-hydroxy-3-methylglutarate-CoA lyase</fullName>
    </alternativeName>
</protein>
<organism>
    <name type="scientific">Gallus gallus</name>
    <name type="common">Chicken</name>
    <dbReference type="NCBI Taxonomy" id="9031"/>
    <lineage>
        <taxon>Eukaryota</taxon>
        <taxon>Metazoa</taxon>
        <taxon>Chordata</taxon>
        <taxon>Craniata</taxon>
        <taxon>Vertebrata</taxon>
        <taxon>Euteleostomi</taxon>
        <taxon>Archelosauria</taxon>
        <taxon>Archosauria</taxon>
        <taxon>Dinosauria</taxon>
        <taxon>Saurischia</taxon>
        <taxon>Theropoda</taxon>
        <taxon>Coelurosauria</taxon>
        <taxon>Aves</taxon>
        <taxon>Neognathae</taxon>
        <taxon>Galloanserae</taxon>
        <taxon>Galliformes</taxon>
        <taxon>Phasianidae</taxon>
        <taxon>Phasianinae</taxon>
        <taxon>Gallus</taxon>
    </lineage>
</organism>
<dbReference type="EC" id="4.1.3.4" evidence="2"/>
<dbReference type="EMBL" id="L07034">
    <property type="protein sequence ID" value="AAA92728.1"/>
    <property type="status" value="ALT_INIT"/>
    <property type="molecule type" value="mRNA"/>
</dbReference>
<dbReference type="PIR" id="B45470">
    <property type="entry name" value="B45470"/>
</dbReference>
<dbReference type="SMR" id="P35915"/>
<dbReference type="FunCoup" id="P35915">
    <property type="interactions" value="1979"/>
</dbReference>
<dbReference type="IntAct" id="P35915">
    <property type="interactions" value="1"/>
</dbReference>
<dbReference type="STRING" id="9031.ENSGALP00000034301"/>
<dbReference type="GlyGen" id="P35915">
    <property type="glycosylation" value="1 site"/>
</dbReference>
<dbReference type="PaxDb" id="9031-ENSGALP00000006445"/>
<dbReference type="VEuPathDB" id="HostDB:geneid_396316"/>
<dbReference type="eggNOG" id="KOG2368">
    <property type="taxonomic scope" value="Eukaryota"/>
</dbReference>
<dbReference type="InParanoid" id="P35915"/>
<dbReference type="OrthoDB" id="1905920at2759"/>
<dbReference type="PhylomeDB" id="P35915"/>
<dbReference type="UniPathway" id="UPA00896">
    <property type="reaction ID" value="UER00863"/>
</dbReference>
<dbReference type="Proteomes" id="UP000000539">
    <property type="component" value="Unassembled WGS sequence"/>
</dbReference>
<dbReference type="GO" id="GO:0005759">
    <property type="term" value="C:mitochondrial matrix"/>
    <property type="evidence" value="ECO:0007669"/>
    <property type="project" value="UniProtKB-SubCell"/>
</dbReference>
<dbReference type="GO" id="GO:0005739">
    <property type="term" value="C:mitochondrion"/>
    <property type="evidence" value="ECO:0000318"/>
    <property type="project" value="GO_Central"/>
</dbReference>
<dbReference type="GO" id="GO:0005777">
    <property type="term" value="C:peroxisome"/>
    <property type="evidence" value="ECO:0007669"/>
    <property type="project" value="UniProtKB-SubCell"/>
</dbReference>
<dbReference type="GO" id="GO:0004419">
    <property type="term" value="F:hydroxymethylglutaryl-CoA lyase activity"/>
    <property type="evidence" value="ECO:0000314"/>
    <property type="project" value="UniProtKB"/>
</dbReference>
<dbReference type="GO" id="GO:0046872">
    <property type="term" value="F:metal ion binding"/>
    <property type="evidence" value="ECO:0000250"/>
    <property type="project" value="UniProtKB"/>
</dbReference>
<dbReference type="GO" id="GO:0046951">
    <property type="term" value="P:ketone body biosynthetic process"/>
    <property type="evidence" value="ECO:0000314"/>
    <property type="project" value="UniProtKB"/>
</dbReference>
<dbReference type="GO" id="GO:0006552">
    <property type="term" value="P:L-leucine catabolic process"/>
    <property type="evidence" value="ECO:0000318"/>
    <property type="project" value="GO_Central"/>
</dbReference>
<dbReference type="CDD" id="cd07938">
    <property type="entry name" value="DRE_TIM_HMGL"/>
    <property type="match status" value="1"/>
</dbReference>
<dbReference type="FunFam" id="3.20.20.70:FF:000038">
    <property type="entry name" value="Hydroxymethylglutaryl-CoA lyase, mitochondrial"/>
    <property type="match status" value="1"/>
</dbReference>
<dbReference type="Gene3D" id="3.20.20.70">
    <property type="entry name" value="Aldolase class I"/>
    <property type="match status" value="1"/>
</dbReference>
<dbReference type="InterPro" id="IPR013785">
    <property type="entry name" value="Aldolase_TIM"/>
</dbReference>
<dbReference type="InterPro" id="IPR000138">
    <property type="entry name" value="HMG_CoA_lyase_AS"/>
</dbReference>
<dbReference type="InterPro" id="IPR043594">
    <property type="entry name" value="HMGL"/>
</dbReference>
<dbReference type="InterPro" id="IPR000891">
    <property type="entry name" value="PYR_CT"/>
</dbReference>
<dbReference type="NCBIfam" id="NF004283">
    <property type="entry name" value="PRK05692.1"/>
    <property type="match status" value="1"/>
</dbReference>
<dbReference type="PANTHER" id="PTHR42738">
    <property type="entry name" value="HYDROXYMETHYLGLUTARYL-COA LYASE"/>
    <property type="match status" value="1"/>
</dbReference>
<dbReference type="PANTHER" id="PTHR42738:SF1">
    <property type="entry name" value="HYDROXYMETHYLGLUTARYL-COA LYASE, MITOCHONDRIAL"/>
    <property type="match status" value="1"/>
</dbReference>
<dbReference type="Pfam" id="PF00682">
    <property type="entry name" value="HMGL-like"/>
    <property type="match status" value="1"/>
</dbReference>
<dbReference type="SUPFAM" id="SSF51569">
    <property type="entry name" value="Aldolase"/>
    <property type="match status" value="1"/>
</dbReference>
<dbReference type="PROSITE" id="PS01062">
    <property type="entry name" value="HMG_COA_LYASE"/>
    <property type="match status" value="1"/>
</dbReference>
<dbReference type="PROSITE" id="PS50991">
    <property type="entry name" value="PYR_CT"/>
    <property type="match status" value="1"/>
</dbReference>
<evidence type="ECO:0000250" key="1"/>
<evidence type="ECO:0000250" key="2">
    <source>
        <dbReference type="UniProtKB" id="P35914"/>
    </source>
</evidence>
<evidence type="ECO:0000250" key="3">
    <source>
        <dbReference type="UniProtKB" id="P38060"/>
    </source>
</evidence>
<evidence type="ECO:0000255" key="4"/>
<evidence type="ECO:0000255" key="5">
    <source>
        <dbReference type="PROSITE-ProRule" id="PRU01151"/>
    </source>
</evidence>
<evidence type="ECO:0000255" key="6">
    <source>
        <dbReference type="PROSITE-ProRule" id="PRU10115"/>
    </source>
</evidence>
<evidence type="ECO:0000305" key="7"/>
<sequence length="298" mass="31436">AFPQRVKVVEVGPRDGLQNEKSVVPTPVKIRLIDMLSETGLPVIEATSFVSPRWVPQMADHAEVMQGINKLPGVSYPVLTPNLKGFQAAVAAGAKEVSIFGAASELFTKKNINCSIEESLERFSEVMNAARAASIPVRGYVSCVLGCPYEGNISAAKVAEVSKKMYSMGCYEISLGDRIGIGTPGSMKEMLAAVMKEVPVGALAVHCHDTYGQALANILVALQMGVSVVDASVAGLGGCPYAQGASGNVATEDLVYMLNGLGIHTGVDLQKLMDTGTFICNALNRRTNSKVSQAACRL</sequence>
<accession>P35915</accession>
<name>HMGCL_CHICK</name>
<reference key="1">
    <citation type="journal article" date="1993" name="J. Biol. Chem.">
        <title>3-hydroxy-3-methylglutaryl coenzyme A lyase (HL). Cloning of human and chicken liver HL cDNAs and characterization of a mutation causing human HL deficiency.</title>
        <authorList>
            <person name="Mitchell G.A."/>
            <person name="Robert M.-F."/>
            <person name="Hruz P.W."/>
            <person name="Wang S."/>
            <person name="Fontaine G."/>
            <person name="Behnke C.E."/>
            <person name="Mende-Mueller L.M."/>
            <person name="Schappert K."/>
            <person name="Lee C."/>
            <person name="Gibson K.M."/>
            <person name="Miziorko H.M."/>
        </authorList>
    </citation>
    <scope>NUCLEOTIDE SEQUENCE [MRNA] OF 10-298</scope>
    <scope>PARTIAL PROTEIN SEQUENCE</scope>
    <source>
        <tissue>Liver</tissue>
    </source>
</reference>
<gene>
    <name type="primary">HMGCL</name>
</gene>